<evidence type="ECO:0000255" key="1">
    <source>
        <dbReference type="HAMAP-Rule" id="MF_00206"/>
    </source>
</evidence>
<evidence type="ECO:0000255" key="2">
    <source>
        <dbReference type="PROSITE-ProRule" id="PRU01266"/>
    </source>
</evidence>
<gene>
    <name evidence="1" type="primary">lipA</name>
    <name type="ordered locus">VCM66_0899</name>
</gene>
<protein>
    <recommendedName>
        <fullName evidence="1">Lipoyl synthase</fullName>
        <ecNumber evidence="1">2.8.1.8</ecNumber>
    </recommendedName>
    <alternativeName>
        <fullName evidence="1">Lip-syn</fullName>
        <shortName evidence="1">LS</shortName>
    </alternativeName>
    <alternativeName>
        <fullName evidence="1">Lipoate synthase</fullName>
    </alternativeName>
    <alternativeName>
        <fullName evidence="1">Lipoic acid synthase</fullName>
    </alternativeName>
    <alternativeName>
        <fullName evidence="1">Sulfur insertion protein LipA</fullName>
    </alternativeName>
</protein>
<keyword id="KW-0004">4Fe-4S</keyword>
<keyword id="KW-0963">Cytoplasm</keyword>
<keyword id="KW-0408">Iron</keyword>
<keyword id="KW-0411">Iron-sulfur</keyword>
<keyword id="KW-0479">Metal-binding</keyword>
<keyword id="KW-0949">S-adenosyl-L-methionine</keyword>
<keyword id="KW-0808">Transferase</keyword>
<name>LIPA_VIBCM</name>
<sequence length="321" mass="36468">MSKPIQMERGVKYRDADKMALIPIKNMPTEQKEVLRKPEWMKIKLPADSQRIQDIKAAMRKNNLHSVCEEASCPNLAECFNHGTATFMILGAICTRRCPFCDVAHGRPNAPEAEEPKKLAQTIHDMKLKYVVITSVDRDDLRDGGAQHFADCNREIRALNPHIKIETLVPDFRGRMEVALEALKDNPPDVFNHNLETAPRLYRKVRPGANYKWSLELLRQFKEQHPHVPTKSGLMMGLGETKEEIVEVLKDLRAHGVTMLTLGQYLAPSRHHLPVERYVPPAEFDELKEIALELGFTHAACGPFVRSSYHADLQAKGLEVK</sequence>
<organism>
    <name type="scientific">Vibrio cholerae serotype O1 (strain M66-2)</name>
    <dbReference type="NCBI Taxonomy" id="579112"/>
    <lineage>
        <taxon>Bacteria</taxon>
        <taxon>Pseudomonadati</taxon>
        <taxon>Pseudomonadota</taxon>
        <taxon>Gammaproteobacteria</taxon>
        <taxon>Vibrionales</taxon>
        <taxon>Vibrionaceae</taxon>
        <taxon>Vibrio</taxon>
    </lineage>
</organism>
<comment type="function">
    <text evidence="1">Catalyzes the radical-mediated insertion of two sulfur atoms into the C-6 and C-8 positions of the octanoyl moiety bound to the lipoyl domains of lipoate-dependent enzymes, thereby converting the octanoylated domains into lipoylated derivatives.</text>
</comment>
<comment type="catalytic activity">
    <reaction evidence="1">
        <text>[[Fe-S] cluster scaffold protein carrying a second [4Fe-4S](2+) cluster] + N(6)-octanoyl-L-lysyl-[protein] + 2 oxidized [2Fe-2S]-[ferredoxin] + 2 S-adenosyl-L-methionine + 4 H(+) = [[Fe-S] cluster scaffold protein] + N(6)-[(R)-dihydrolipoyl]-L-lysyl-[protein] + 4 Fe(3+) + 2 hydrogen sulfide + 2 5'-deoxyadenosine + 2 L-methionine + 2 reduced [2Fe-2S]-[ferredoxin]</text>
        <dbReference type="Rhea" id="RHEA:16585"/>
        <dbReference type="Rhea" id="RHEA-COMP:9928"/>
        <dbReference type="Rhea" id="RHEA-COMP:10000"/>
        <dbReference type="Rhea" id="RHEA-COMP:10001"/>
        <dbReference type="Rhea" id="RHEA-COMP:10475"/>
        <dbReference type="Rhea" id="RHEA-COMP:14568"/>
        <dbReference type="Rhea" id="RHEA-COMP:14569"/>
        <dbReference type="ChEBI" id="CHEBI:15378"/>
        <dbReference type="ChEBI" id="CHEBI:17319"/>
        <dbReference type="ChEBI" id="CHEBI:29034"/>
        <dbReference type="ChEBI" id="CHEBI:29919"/>
        <dbReference type="ChEBI" id="CHEBI:33722"/>
        <dbReference type="ChEBI" id="CHEBI:33737"/>
        <dbReference type="ChEBI" id="CHEBI:33738"/>
        <dbReference type="ChEBI" id="CHEBI:57844"/>
        <dbReference type="ChEBI" id="CHEBI:59789"/>
        <dbReference type="ChEBI" id="CHEBI:78809"/>
        <dbReference type="ChEBI" id="CHEBI:83100"/>
        <dbReference type="EC" id="2.8.1.8"/>
    </reaction>
</comment>
<comment type="cofactor">
    <cofactor evidence="1">
        <name>[4Fe-4S] cluster</name>
        <dbReference type="ChEBI" id="CHEBI:49883"/>
    </cofactor>
    <text evidence="1">Binds 2 [4Fe-4S] clusters per subunit. One cluster is coordinated with 3 cysteines and an exchangeable S-adenosyl-L-methionine.</text>
</comment>
<comment type="pathway">
    <text evidence="1">Protein modification; protein lipoylation via endogenous pathway; protein N(6)-(lipoyl)lysine from octanoyl-[acyl-carrier-protein]: step 2/2.</text>
</comment>
<comment type="subcellular location">
    <subcellularLocation>
        <location evidence="1">Cytoplasm</location>
    </subcellularLocation>
</comment>
<comment type="similarity">
    <text evidence="1">Belongs to the radical SAM superfamily. Lipoyl synthase family.</text>
</comment>
<feature type="chain" id="PRO_1000124648" description="Lipoyl synthase">
    <location>
        <begin position="1"/>
        <end position="321"/>
    </location>
</feature>
<feature type="domain" description="Radical SAM core" evidence="2">
    <location>
        <begin position="80"/>
        <end position="297"/>
    </location>
</feature>
<feature type="binding site" evidence="1">
    <location>
        <position position="68"/>
    </location>
    <ligand>
        <name>[4Fe-4S] cluster</name>
        <dbReference type="ChEBI" id="CHEBI:49883"/>
        <label>1</label>
    </ligand>
</feature>
<feature type="binding site" evidence="1">
    <location>
        <position position="73"/>
    </location>
    <ligand>
        <name>[4Fe-4S] cluster</name>
        <dbReference type="ChEBI" id="CHEBI:49883"/>
        <label>1</label>
    </ligand>
</feature>
<feature type="binding site" evidence="1">
    <location>
        <position position="79"/>
    </location>
    <ligand>
        <name>[4Fe-4S] cluster</name>
        <dbReference type="ChEBI" id="CHEBI:49883"/>
        <label>1</label>
    </ligand>
</feature>
<feature type="binding site" evidence="1">
    <location>
        <position position="94"/>
    </location>
    <ligand>
        <name>[4Fe-4S] cluster</name>
        <dbReference type="ChEBI" id="CHEBI:49883"/>
        <label>2</label>
        <note>4Fe-4S-S-AdoMet</note>
    </ligand>
</feature>
<feature type="binding site" evidence="1">
    <location>
        <position position="98"/>
    </location>
    <ligand>
        <name>[4Fe-4S] cluster</name>
        <dbReference type="ChEBI" id="CHEBI:49883"/>
        <label>2</label>
        <note>4Fe-4S-S-AdoMet</note>
    </ligand>
</feature>
<feature type="binding site" evidence="1">
    <location>
        <position position="101"/>
    </location>
    <ligand>
        <name>[4Fe-4S] cluster</name>
        <dbReference type="ChEBI" id="CHEBI:49883"/>
        <label>2</label>
        <note>4Fe-4S-S-AdoMet</note>
    </ligand>
</feature>
<feature type="binding site" evidence="1">
    <location>
        <position position="308"/>
    </location>
    <ligand>
        <name>[4Fe-4S] cluster</name>
        <dbReference type="ChEBI" id="CHEBI:49883"/>
        <label>1</label>
    </ligand>
</feature>
<dbReference type="EC" id="2.8.1.8" evidence="1"/>
<dbReference type="EMBL" id="CP001233">
    <property type="protein sequence ID" value="ACP05217.1"/>
    <property type="molecule type" value="Genomic_DNA"/>
</dbReference>
<dbReference type="RefSeq" id="WP_000042590.1">
    <property type="nucleotide sequence ID" value="NC_012578.1"/>
</dbReference>
<dbReference type="SMR" id="C3LTJ1"/>
<dbReference type="GeneID" id="89514946"/>
<dbReference type="KEGG" id="vcm:VCM66_0899"/>
<dbReference type="HOGENOM" id="CLU_033144_2_1_6"/>
<dbReference type="UniPathway" id="UPA00538">
    <property type="reaction ID" value="UER00593"/>
</dbReference>
<dbReference type="Proteomes" id="UP000001217">
    <property type="component" value="Chromosome I"/>
</dbReference>
<dbReference type="GO" id="GO:0005737">
    <property type="term" value="C:cytoplasm"/>
    <property type="evidence" value="ECO:0007669"/>
    <property type="project" value="UniProtKB-SubCell"/>
</dbReference>
<dbReference type="GO" id="GO:0051539">
    <property type="term" value="F:4 iron, 4 sulfur cluster binding"/>
    <property type="evidence" value="ECO:0007669"/>
    <property type="project" value="UniProtKB-UniRule"/>
</dbReference>
<dbReference type="GO" id="GO:0016992">
    <property type="term" value="F:lipoate synthase activity"/>
    <property type="evidence" value="ECO:0007669"/>
    <property type="project" value="UniProtKB-UniRule"/>
</dbReference>
<dbReference type="GO" id="GO:0046872">
    <property type="term" value="F:metal ion binding"/>
    <property type="evidence" value="ECO:0007669"/>
    <property type="project" value="UniProtKB-KW"/>
</dbReference>
<dbReference type="CDD" id="cd01335">
    <property type="entry name" value="Radical_SAM"/>
    <property type="match status" value="1"/>
</dbReference>
<dbReference type="FunFam" id="3.20.20.70:FF:000023">
    <property type="entry name" value="Lipoyl synthase"/>
    <property type="match status" value="1"/>
</dbReference>
<dbReference type="Gene3D" id="3.20.20.70">
    <property type="entry name" value="Aldolase class I"/>
    <property type="match status" value="1"/>
</dbReference>
<dbReference type="HAMAP" id="MF_00206">
    <property type="entry name" value="Lipoyl_synth"/>
    <property type="match status" value="1"/>
</dbReference>
<dbReference type="InterPro" id="IPR013785">
    <property type="entry name" value="Aldolase_TIM"/>
</dbReference>
<dbReference type="InterPro" id="IPR006638">
    <property type="entry name" value="Elp3/MiaA/NifB-like_rSAM"/>
</dbReference>
<dbReference type="InterPro" id="IPR031691">
    <property type="entry name" value="LIAS_N"/>
</dbReference>
<dbReference type="InterPro" id="IPR003698">
    <property type="entry name" value="Lipoyl_synth"/>
</dbReference>
<dbReference type="InterPro" id="IPR007197">
    <property type="entry name" value="rSAM"/>
</dbReference>
<dbReference type="NCBIfam" id="TIGR00510">
    <property type="entry name" value="lipA"/>
    <property type="match status" value="1"/>
</dbReference>
<dbReference type="NCBIfam" id="NF004019">
    <property type="entry name" value="PRK05481.1"/>
    <property type="match status" value="1"/>
</dbReference>
<dbReference type="NCBIfam" id="NF009544">
    <property type="entry name" value="PRK12928.1"/>
    <property type="match status" value="1"/>
</dbReference>
<dbReference type="PANTHER" id="PTHR10949">
    <property type="entry name" value="LIPOYL SYNTHASE"/>
    <property type="match status" value="1"/>
</dbReference>
<dbReference type="PANTHER" id="PTHR10949:SF0">
    <property type="entry name" value="LIPOYL SYNTHASE, MITOCHONDRIAL"/>
    <property type="match status" value="1"/>
</dbReference>
<dbReference type="Pfam" id="PF16881">
    <property type="entry name" value="LIAS_N"/>
    <property type="match status" value="1"/>
</dbReference>
<dbReference type="Pfam" id="PF04055">
    <property type="entry name" value="Radical_SAM"/>
    <property type="match status" value="1"/>
</dbReference>
<dbReference type="PIRSF" id="PIRSF005963">
    <property type="entry name" value="Lipoyl_synth"/>
    <property type="match status" value="1"/>
</dbReference>
<dbReference type="SFLD" id="SFLDF00271">
    <property type="entry name" value="lipoyl_synthase"/>
    <property type="match status" value="1"/>
</dbReference>
<dbReference type="SFLD" id="SFLDG01058">
    <property type="entry name" value="lipoyl_synthase_like"/>
    <property type="match status" value="1"/>
</dbReference>
<dbReference type="SMART" id="SM00729">
    <property type="entry name" value="Elp3"/>
    <property type="match status" value="1"/>
</dbReference>
<dbReference type="SUPFAM" id="SSF102114">
    <property type="entry name" value="Radical SAM enzymes"/>
    <property type="match status" value="1"/>
</dbReference>
<dbReference type="PROSITE" id="PS51918">
    <property type="entry name" value="RADICAL_SAM"/>
    <property type="match status" value="1"/>
</dbReference>
<accession>C3LTJ1</accession>
<reference key="1">
    <citation type="journal article" date="2008" name="PLoS ONE">
        <title>A recalibrated molecular clock and independent origins for the cholera pandemic clones.</title>
        <authorList>
            <person name="Feng L."/>
            <person name="Reeves P.R."/>
            <person name="Lan R."/>
            <person name="Ren Y."/>
            <person name="Gao C."/>
            <person name="Zhou Z."/>
            <person name="Ren Y."/>
            <person name="Cheng J."/>
            <person name="Wang W."/>
            <person name="Wang J."/>
            <person name="Qian W."/>
            <person name="Li D."/>
            <person name="Wang L."/>
        </authorList>
    </citation>
    <scope>NUCLEOTIDE SEQUENCE [LARGE SCALE GENOMIC DNA]</scope>
    <source>
        <strain>M66-2</strain>
    </source>
</reference>
<proteinExistence type="inferred from homology"/>